<proteinExistence type="inferred from homology"/>
<sequence>MPRVIGIDIPDNKRLEISLTYLYGIGRHLSNEIIVKLGLDPNMRAHKLTQDDLARLNGLLTSEYMVEGDLRRQVQNNIKRLISIHSYRGMRHRLGLPVRGQRTKTNSRTRKGRRKTVANKKK</sequence>
<comment type="function">
    <text evidence="1">Located at the top of the head of the 30S subunit, it contacts several helices of the 16S rRNA. In the 70S ribosome it contacts the 23S rRNA (bridge B1a) and protein L5 of the 50S subunit (bridge B1b), connecting the 2 subunits; these bridges are implicated in subunit movement. Contacts the tRNAs in the A and P-sites.</text>
</comment>
<comment type="subunit">
    <text evidence="1">Part of the 30S ribosomal subunit. Forms a loose heterodimer with protein S19. Forms two bridges to the 50S subunit in the 70S ribosome.</text>
</comment>
<comment type="similarity">
    <text evidence="1">Belongs to the universal ribosomal protein uS13 family.</text>
</comment>
<evidence type="ECO:0000255" key="1">
    <source>
        <dbReference type="HAMAP-Rule" id="MF_01315"/>
    </source>
</evidence>
<evidence type="ECO:0000256" key="2">
    <source>
        <dbReference type="SAM" id="MobiDB-lite"/>
    </source>
</evidence>
<evidence type="ECO:0000305" key="3"/>
<keyword id="KW-1185">Reference proteome</keyword>
<keyword id="KW-0687">Ribonucleoprotein</keyword>
<keyword id="KW-0689">Ribosomal protein</keyword>
<keyword id="KW-0694">RNA-binding</keyword>
<keyword id="KW-0699">rRNA-binding</keyword>
<keyword id="KW-0820">tRNA-binding</keyword>
<dbReference type="EMBL" id="BX908798">
    <property type="protein sequence ID" value="CAF23155.1"/>
    <property type="molecule type" value="Genomic_DNA"/>
</dbReference>
<dbReference type="RefSeq" id="WP_011174981.1">
    <property type="nucleotide sequence ID" value="NC_005861.2"/>
</dbReference>
<dbReference type="SMR" id="Q6ME44"/>
<dbReference type="STRING" id="264201.pc0431"/>
<dbReference type="KEGG" id="pcu:PC_RS02105"/>
<dbReference type="eggNOG" id="COG0099">
    <property type="taxonomic scope" value="Bacteria"/>
</dbReference>
<dbReference type="HOGENOM" id="CLU_103849_1_2_0"/>
<dbReference type="OrthoDB" id="9803610at2"/>
<dbReference type="Proteomes" id="UP000000529">
    <property type="component" value="Chromosome"/>
</dbReference>
<dbReference type="GO" id="GO:0005829">
    <property type="term" value="C:cytosol"/>
    <property type="evidence" value="ECO:0007669"/>
    <property type="project" value="TreeGrafter"/>
</dbReference>
<dbReference type="GO" id="GO:0015935">
    <property type="term" value="C:small ribosomal subunit"/>
    <property type="evidence" value="ECO:0007669"/>
    <property type="project" value="TreeGrafter"/>
</dbReference>
<dbReference type="GO" id="GO:0019843">
    <property type="term" value="F:rRNA binding"/>
    <property type="evidence" value="ECO:0007669"/>
    <property type="project" value="UniProtKB-UniRule"/>
</dbReference>
<dbReference type="GO" id="GO:0003735">
    <property type="term" value="F:structural constituent of ribosome"/>
    <property type="evidence" value="ECO:0007669"/>
    <property type="project" value="InterPro"/>
</dbReference>
<dbReference type="GO" id="GO:0000049">
    <property type="term" value="F:tRNA binding"/>
    <property type="evidence" value="ECO:0007669"/>
    <property type="project" value="UniProtKB-UniRule"/>
</dbReference>
<dbReference type="GO" id="GO:0006412">
    <property type="term" value="P:translation"/>
    <property type="evidence" value="ECO:0007669"/>
    <property type="project" value="UniProtKB-UniRule"/>
</dbReference>
<dbReference type="FunFam" id="1.10.8.50:FF:000001">
    <property type="entry name" value="30S ribosomal protein S13"/>
    <property type="match status" value="1"/>
</dbReference>
<dbReference type="FunFam" id="4.10.910.10:FF:000001">
    <property type="entry name" value="30S ribosomal protein S13"/>
    <property type="match status" value="1"/>
</dbReference>
<dbReference type="Gene3D" id="1.10.8.50">
    <property type="match status" value="1"/>
</dbReference>
<dbReference type="Gene3D" id="4.10.910.10">
    <property type="entry name" value="30s ribosomal protein s13, domain 2"/>
    <property type="match status" value="1"/>
</dbReference>
<dbReference type="HAMAP" id="MF_01315">
    <property type="entry name" value="Ribosomal_uS13"/>
    <property type="match status" value="1"/>
</dbReference>
<dbReference type="InterPro" id="IPR027437">
    <property type="entry name" value="Rbsml_uS13_C"/>
</dbReference>
<dbReference type="InterPro" id="IPR001892">
    <property type="entry name" value="Ribosomal_uS13"/>
</dbReference>
<dbReference type="InterPro" id="IPR010979">
    <property type="entry name" value="Ribosomal_uS13-like_H2TH"/>
</dbReference>
<dbReference type="InterPro" id="IPR019980">
    <property type="entry name" value="Ribosomal_uS13_bac-type"/>
</dbReference>
<dbReference type="InterPro" id="IPR018269">
    <property type="entry name" value="Ribosomal_uS13_CS"/>
</dbReference>
<dbReference type="NCBIfam" id="TIGR03631">
    <property type="entry name" value="uS13_bact"/>
    <property type="match status" value="1"/>
</dbReference>
<dbReference type="PANTHER" id="PTHR10871">
    <property type="entry name" value="30S RIBOSOMAL PROTEIN S13/40S RIBOSOMAL PROTEIN S18"/>
    <property type="match status" value="1"/>
</dbReference>
<dbReference type="PANTHER" id="PTHR10871:SF1">
    <property type="entry name" value="SMALL RIBOSOMAL SUBUNIT PROTEIN US13M"/>
    <property type="match status" value="1"/>
</dbReference>
<dbReference type="Pfam" id="PF00416">
    <property type="entry name" value="Ribosomal_S13"/>
    <property type="match status" value="1"/>
</dbReference>
<dbReference type="PIRSF" id="PIRSF002134">
    <property type="entry name" value="Ribosomal_S13"/>
    <property type="match status" value="1"/>
</dbReference>
<dbReference type="SUPFAM" id="SSF46946">
    <property type="entry name" value="S13-like H2TH domain"/>
    <property type="match status" value="1"/>
</dbReference>
<dbReference type="PROSITE" id="PS00646">
    <property type="entry name" value="RIBOSOMAL_S13_1"/>
    <property type="match status" value="1"/>
</dbReference>
<dbReference type="PROSITE" id="PS50159">
    <property type="entry name" value="RIBOSOMAL_S13_2"/>
    <property type="match status" value="1"/>
</dbReference>
<name>RS13_PARUW</name>
<feature type="chain" id="PRO_0000230537" description="Small ribosomal subunit protein uS13">
    <location>
        <begin position="1"/>
        <end position="122"/>
    </location>
</feature>
<feature type="region of interest" description="Disordered" evidence="2">
    <location>
        <begin position="95"/>
        <end position="122"/>
    </location>
</feature>
<feature type="compositionally biased region" description="Basic residues" evidence="2">
    <location>
        <begin position="101"/>
        <end position="122"/>
    </location>
</feature>
<reference key="1">
    <citation type="journal article" date="2004" name="Science">
        <title>Illuminating the evolutionary history of chlamydiae.</title>
        <authorList>
            <person name="Horn M."/>
            <person name="Collingro A."/>
            <person name="Schmitz-Esser S."/>
            <person name="Beier C.L."/>
            <person name="Purkhold U."/>
            <person name="Fartmann B."/>
            <person name="Brandt P."/>
            <person name="Nyakatura G.J."/>
            <person name="Droege M."/>
            <person name="Frishman D."/>
            <person name="Rattei T."/>
            <person name="Mewes H.-W."/>
            <person name="Wagner M."/>
        </authorList>
    </citation>
    <scope>NUCLEOTIDE SEQUENCE [LARGE SCALE GENOMIC DNA]</scope>
    <source>
        <strain>UWE25</strain>
    </source>
</reference>
<organism>
    <name type="scientific">Protochlamydia amoebophila (strain UWE25)</name>
    <dbReference type="NCBI Taxonomy" id="264201"/>
    <lineage>
        <taxon>Bacteria</taxon>
        <taxon>Pseudomonadati</taxon>
        <taxon>Chlamydiota</taxon>
        <taxon>Chlamydiia</taxon>
        <taxon>Parachlamydiales</taxon>
        <taxon>Parachlamydiaceae</taxon>
        <taxon>Candidatus Protochlamydia</taxon>
    </lineage>
</organism>
<accession>Q6ME44</accession>
<gene>
    <name evidence="1" type="primary">rpsM</name>
    <name type="ordered locus">pc0431</name>
</gene>
<protein>
    <recommendedName>
        <fullName evidence="1">Small ribosomal subunit protein uS13</fullName>
    </recommendedName>
    <alternativeName>
        <fullName evidence="3">30S ribosomal protein S13</fullName>
    </alternativeName>
</protein>